<reference key="1">
    <citation type="journal article" date="2011" name="Stand. Genomic Sci.">
        <title>Complete genome sequence of Allochromatium vinosum DSM 180(T).</title>
        <authorList>
            <person name="Weissgerber T."/>
            <person name="Zigann R."/>
            <person name="Bruce D."/>
            <person name="Chang Y.J."/>
            <person name="Detter J.C."/>
            <person name="Han C."/>
            <person name="Hauser L."/>
            <person name="Jeffries C.D."/>
            <person name="Land M."/>
            <person name="Munk A.C."/>
            <person name="Tapia R."/>
            <person name="Dahl C."/>
        </authorList>
    </citation>
    <scope>NUCLEOTIDE SEQUENCE [LARGE SCALE GENOMIC DNA]</scope>
    <source>
        <strain>ATCC 17899 / DSM 180 / NBRC 103801 / NCIMB 10441 / D</strain>
    </source>
</reference>
<reference key="2">
    <citation type="journal article" date="2017" name="Nat. Chem. Biol.">
        <title>Parallel evolution of non-homologous isofunctional enzymes in methionine biosynthesis.</title>
        <authorList>
            <person name="Bastard K."/>
            <person name="Perret A."/>
            <person name="Mariage A."/>
            <person name="Bessonnet T."/>
            <person name="Pinet-Turpault A."/>
            <person name="Petit J.L."/>
            <person name="Darii E."/>
            <person name="Bazire P."/>
            <person name="Vergne-Vaxelaire C."/>
            <person name="Brewee C."/>
            <person name="Debard A."/>
            <person name="Pellouin V."/>
            <person name="Besnard-Gonnet M."/>
            <person name="Artiguenave F."/>
            <person name="Medigue C."/>
            <person name="Vallenet D."/>
            <person name="Danchin A."/>
            <person name="Zaparucha A."/>
            <person name="Weissenbach J."/>
            <person name="Salanoubat M."/>
            <person name="de Berardinis V."/>
        </authorList>
    </citation>
    <scope>FUNCTION</scope>
    <scope>CATALYTIC ACTIVITY</scope>
</reference>
<protein>
    <recommendedName>
        <fullName evidence="1">Homoserine O-succinyltransferase</fullName>
        <shortName evidence="1 3">HST</shortName>
        <ecNumber evidence="1 2">2.3.1.46</ecNumber>
    </recommendedName>
    <alternativeName>
        <fullName evidence="1">Homoserine transsuccinylase</fullName>
        <shortName evidence="1">HTS</shortName>
    </alternativeName>
</protein>
<keyword id="KW-0012">Acyltransferase</keyword>
<keyword id="KW-0028">Amino-acid biosynthesis</keyword>
<keyword id="KW-0963">Cytoplasm</keyword>
<keyword id="KW-0486">Methionine biosynthesis</keyword>
<keyword id="KW-1185">Reference proteome</keyword>
<keyword id="KW-0808">Transferase</keyword>
<evidence type="ECO:0000255" key="1">
    <source>
        <dbReference type="HAMAP-Rule" id="MF_00295"/>
    </source>
</evidence>
<evidence type="ECO:0000269" key="2">
    <source>
    </source>
</evidence>
<evidence type="ECO:0000303" key="3">
    <source>
    </source>
</evidence>
<evidence type="ECO:0000312" key="4">
    <source>
        <dbReference type="EMBL" id="ADC63405.1"/>
    </source>
</evidence>
<organism>
    <name type="scientific">Allochromatium vinosum (strain ATCC 17899 / DSM 180 / NBRC 103801 / NCIMB 10441 / D)</name>
    <name type="common">Chromatium vinosum</name>
    <dbReference type="NCBI Taxonomy" id="572477"/>
    <lineage>
        <taxon>Bacteria</taxon>
        <taxon>Pseudomonadati</taxon>
        <taxon>Pseudomonadota</taxon>
        <taxon>Gammaproteobacteria</taxon>
        <taxon>Chromatiales</taxon>
        <taxon>Chromatiaceae</taxon>
        <taxon>Allochromatium</taxon>
    </lineage>
</organism>
<sequence>MPIVAHNDLPTFARLREEGQQILDPDFALHQDIRELHIGLLNMMPDAALAATERQFFRLIGESNQIAQFYVHPFTLKELERGPEARAHVERYYQSFDQIRADGLDALIITGANVTGPDLALEPFWEPLIEVVDWAYDNVCSTLCSCLATHAVMQFRYGERRRRLPAKRWGVFPHRVLARTHPLVADVNTCFDVPHSRFNDISHAQFVGAGLHVLVESEEAGVHLAVSPDGFRQVFFQGHPEYDTISLLKEYKREVGRFAAGARSDYPPFPDNYFGLQTRAILNEHRECVIRALDQGRKPPELPERLIAAALHNTWHDTAEGVIGNWMGLIYQITHHDRRQTFMAGIDPNDPLGLCCG</sequence>
<dbReference type="EC" id="2.3.1.46" evidence="1 2"/>
<dbReference type="EMBL" id="CP001896">
    <property type="protein sequence ID" value="ADC63405.1"/>
    <property type="molecule type" value="Genomic_DNA"/>
</dbReference>
<dbReference type="RefSeq" id="WP_012971675.1">
    <property type="nucleotide sequence ID" value="NC_013851.1"/>
</dbReference>
<dbReference type="SMR" id="D3RNP0"/>
<dbReference type="STRING" id="572477.Alvin_2493"/>
<dbReference type="KEGG" id="alv:Alvin_2493"/>
<dbReference type="eggNOG" id="COG1897">
    <property type="taxonomic scope" value="Bacteria"/>
</dbReference>
<dbReference type="HOGENOM" id="CLU_057851_0_1_6"/>
<dbReference type="OrthoDB" id="9772423at2"/>
<dbReference type="UniPathway" id="UPA00051">
    <property type="reaction ID" value="UER00075"/>
</dbReference>
<dbReference type="Proteomes" id="UP000001441">
    <property type="component" value="Chromosome"/>
</dbReference>
<dbReference type="GO" id="GO:0005737">
    <property type="term" value="C:cytoplasm"/>
    <property type="evidence" value="ECO:0007669"/>
    <property type="project" value="UniProtKB-SubCell"/>
</dbReference>
<dbReference type="GO" id="GO:0004414">
    <property type="term" value="F:homoserine O-acetyltransferase activity"/>
    <property type="evidence" value="ECO:0007669"/>
    <property type="project" value="UniProtKB-UniRule"/>
</dbReference>
<dbReference type="GO" id="GO:0008899">
    <property type="term" value="F:homoserine O-succinyltransferase activity"/>
    <property type="evidence" value="ECO:0007669"/>
    <property type="project" value="UniProtKB-EC"/>
</dbReference>
<dbReference type="GO" id="GO:0009086">
    <property type="term" value="P:methionine biosynthetic process"/>
    <property type="evidence" value="ECO:0007669"/>
    <property type="project" value="UniProtKB-UniRule"/>
</dbReference>
<dbReference type="Gene3D" id="3.40.50.880">
    <property type="match status" value="1"/>
</dbReference>
<dbReference type="HAMAP" id="MF_00295">
    <property type="entry name" value="MetA_acyltransf"/>
    <property type="match status" value="1"/>
</dbReference>
<dbReference type="InterPro" id="IPR029062">
    <property type="entry name" value="Class_I_gatase-like"/>
</dbReference>
<dbReference type="InterPro" id="IPR033752">
    <property type="entry name" value="MetA_family"/>
</dbReference>
<dbReference type="NCBIfam" id="NF003776">
    <property type="entry name" value="PRK05368.1-3"/>
    <property type="match status" value="1"/>
</dbReference>
<dbReference type="PANTHER" id="PTHR20919">
    <property type="entry name" value="HOMOSERINE O-SUCCINYLTRANSFERASE"/>
    <property type="match status" value="1"/>
</dbReference>
<dbReference type="PANTHER" id="PTHR20919:SF0">
    <property type="entry name" value="HOMOSERINE O-SUCCINYLTRANSFERASE"/>
    <property type="match status" value="1"/>
</dbReference>
<dbReference type="Pfam" id="PF04204">
    <property type="entry name" value="HTS"/>
    <property type="match status" value="1"/>
</dbReference>
<dbReference type="PIRSF" id="PIRSF000450">
    <property type="entry name" value="H_ser_succinyltr"/>
    <property type="match status" value="1"/>
</dbReference>
<dbReference type="SUPFAM" id="SSF52317">
    <property type="entry name" value="Class I glutamine amidotransferase-like"/>
    <property type="match status" value="1"/>
</dbReference>
<feature type="chain" id="PRO_0000440348" description="Homoserine O-succinyltransferase">
    <location>
        <begin position="1"/>
        <end position="357"/>
    </location>
</feature>
<feature type="active site" description="Acyl-thioester intermediate" evidence="1">
    <location>
        <position position="146"/>
    </location>
</feature>
<feature type="active site" description="Proton acceptor" evidence="1">
    <location>
        <position position="239"/>
    </location>
</feature>
<feature type="active site" evidence="1">
    <location>
        <position position="241"/>
    </location>
</feature>
<feature type="binding site" evidence="1">
    <location>
        <position position="167"/>
    </location>
    <ligand>
        <name>substrate</name>
    </ligand>
</feature>
<feature type="binding site" evidence="1">
    <location>
        <position position="196"/>
    </location>
    <ligand>
        <name>substrate</name>
    </ligand>
</feature>
<feature type="binding site" evidence="1">
    <location>
        <position position="253"/>
    </location>
    <ligand>
        <name>substrate</name>
    </ligand>
</feature>
<feature type="site" description="Important for acyl-CoA specificity" evidence="1">
    <location>
        <position position="113"/>
    </location>
</feature>
<feature type="site" description="Important for acyl-CoA specificity" evidence="1">
    <location>
        <position position="147"/>
    </location>
</feature>
<feature type="site" description="Important for substrate specificity" evidence="1">
    <location>
        <position position="196"/>
    </location>
</feature>
<gene>
    <name evidence="1 3" type="primary">metAS</name>
    <name evidence="4" type="ordered locus">Alvin_2493</name>
</gene>
<name>METAS_ALLVD</name>
<proteinExistence type="evidence at protein level"/>
<comment type="function">
    <text evidence="1 2">Transfers a succinyl group from succinyl-CoA to L-homoserine, forming succinyl-L-homoserine.</text>
</comment>
<comment type="catalytic activity">
    <reaction evidence="1 2">
        <text>L-homoserine + succinyl-CoA = O-succinyl-L-homoserine + CoA</text>
        <dbReference type="Rhea" id="RHEA:22008"/>
        <dbReference type="ChEBI" id="CHEBI:57287"/>
        <dbReference type="ChEBI" id="CHEBI:57292"/>
        <dbReference type="ChEBI" id="CHEBI:57476"/>
        <dbReference type="ChEBI" id="CHEBI:57661"/>
        <dbReference type="EC" id="2.3.1.46"/>
    </reaction>
</comment>
<comment type="pathway">
    <text evidence="1">Amino-acid biosynthesis; L-methionine biosynthesis via de novo pathway; O-succinyl-L-homoserine from L-homoserine: step 1/1.</text>
</comment>
<comment type="subcellular location">
    <subcellularLocation>
        <location evidence="1">Cytoplasm</location>
    </subcellularLocation>
</comment>
<comment type="similarity">
    <text evidence="1">Belongs to the MetA family.</text>
</comment>
<accession>D3RNP0</accession>